<keyword id="KW-0002">3D-structure</keyword>
<keyword id="KW-0687">Ribonucleoprotein</keyword>
<keyword id="KW-0689">Ribosomal protein</keyword>
<keyword id="KW-0694">RNA-binding</keyword>
<keyword id="KW-0699">rRNA-binding</keyword>
<evidence type="ECO:0000255" key="1">
    <source>
        <dbReference type="HAMAP-Rule" id="MF_01343"/>
    </source>
</evidence>
<evidence type="ECO:0000305" key="2"/>
<evidence type="ECO:0007829" key="3">
    <source>
        <dbReference type="PDB" id="8CWO"/>
    </source>
</evidence>
<accession>Q6A7P5</accession>
<protein>
    <recommendedName>
        <fullName evidence="1">Small ribosomal subunit protein uS15</fullName>
    </recommendedName>
    <alternativeName>
        <fullName evidence="2">30S ribosomal protein S15</fullName>
    </alternativeName>
</protein>
<dbReference type="EMBL" id="AE017283">
    <property type="protein sequence ID" value="AAT83220.1"/>
    <property type="molecule type" value="Genomic_DNA"/>
</dbReference>
<dbReference type="RefSeq" id="WP_002514283.1">
    <property type="nucleotide sequence ID" value="NZ_CP025935.1"/>
</dbReference>
<dbReference type="PDB" id="8CRX">
    <property type="method" value="EM"/>
    <property type="resolution" value="2.78 A"/>
    <property type="chains" value="O=1-87"/>
</dbReference>
<dbReference type="PDB" id="8CWO">
    <property type="method" value="EM"/>
    <property type="resolution" value="2.84 A"/>
    <property type="chains" value="O=1-87"/>
</dbReference>
<dbReference type="PDBsum" id="8CRX"/>
<dbReference type="PDBsum" id="8CWO"/>
<dbReference type="SMR" id="Q6A7P5"/>
<dbReference type="EnsemblBacteria" id="AAT83220">
    <property type="protein sequence ID" value="AAT83220"/>
    <property type="gene ID" value="PPA1472"/>
</dbReference>
<dbReference type="GeneID" id="92880148"/>
<dbReference type="KEGG" id="pac:PPA1472"/>
<dbReference type="eggNOG" id="COG0184">
    <property type="taxonomic scope" value="Bacteria"/>
</dbReference>
<dbReference type="HOGENOM" id="CLU_148518_0_0_11"/>
<dbReference type="Proteomes" id="UP000000603">
    <property type="component" value="Chromosome"/>
</dbReference>
<dbReference type="GO" id="GO:0022627">
    <property type="term" value="C:cytosolic small ribosomal subunit"/>
    <property type="evidence" value="ECO:0007669"/>
    <property type="project" value="TreeGrafter"/>
</dbReference>
<dbReference type="GO" id="GO:0019843">
    <property type="term" value="F:rRNA binding"/>
    <property type="evidence" value="ECO:0007669"/>
    <property type="project" value="UniProtKB-UniRule"/>
</dbReference>
<dbReference type="GO" id="GO:0003735">
    <property type="term" value="F:structural constituent of ribosome"/>
    <property type="evidence" value="ECO:0007669"/>
    <property type="project" value="InterPro"/>
</dbReference>
<dbReference type="GO" id="GO:0006412">
    <property type="term" value="P:translation"/>
    <property type="evidence" value="ECO:0007669"/>
    <property type="project" value="UniProtKB-UniRule"/>
</dbReference>
<dbReference type="CDD" id="cd00353">
    <property type="entry name" value="Ribosomal_S15p_S13e"/>
    <property type="match status" value="1"/>
</dbReference>
<dbReference type="FunFam" id="1.10.287.10:FF:000002">
    <property type="entry name" value="30S ribosomal protein S15"/>
    <property type="match status" value="1"/>
</dbReference>
<dbReference type="Gene3D" id="6.10.250.3130">
    <property type="match status" value="1"/>
</dbReference>
<dbReference type="Gene3D" id="1.10.287.10">
    <property type="entry name" value="S15/NS1, RNA-binding"/>
    <property type="match status" value="1"/>
</dbReference>
<dbReference type="HAMAP" id="MF_01343_B">
    <property type="entry name" value="Ribosomal_uS15_B"/>
    <property type="match status" value="1"/>
</dbReference>
<dbReference type="InterPro" id="IPR000589">
    <property type="entry name" value="Ribosomal_uS15"/>
</dbReference>
<dbReference type="InterPro" id="IPR005290">
    <property type="entry name" value="Ribosomal_uS15_bac-type"/>
</dbReference>
<dbReference type="InterPro" id="IPR009068">
    <property type="entry name" value="uS15_NS1_RNA-bd_sf"/>
</dbReference>
<dbReference type="NCBIfam" id="TIGR00952">
    <property type="entry name" value="S15_bact"/>
    <property type="match status" value="1"/>
</dbReference>
<dbReference type="PANTHER" id="PTHR23321">
    <property type="entry name" value="RIBOSOMAL PROTEIN S15, BACTERIAL AND ORGANELLAR"/>
    <property type="match status" value="1"/>
</dbReference>
<dbReference type="PANTHER" id="PTHR23321:SF26">
    <property type="entry name" value="SMALL RIBOSOMAL SUBUNIT PROTEIN US15M"/>
    <property type="match status" value="1"/>
</dbReference>
<dbReference type="Pfam" id="PF00312">
    <property type="entry name" value="Ribosomal_S15"/>
    <property type="match status" value="1"/>
</dbReference>
<dbReference type="SMART" id="SM01387">
    <property type="entry name" value="Ribosomal_S15"/>
    <property type="match status" value="1"/>
</dbReference>
<dbReference type="SUPFAM" id="SSF47060">
    <property type="entry name" value="S15/NS1 RNA-binding domain"/>
    <property type="match status" value="1"/>
</dbReference>
<dbReference type="PROSITE" id="PS00362">
    <property type="entry name" value="RIBOSOMAL_S15"/>
    <property type="match status" value="1"/>
</dbReference>
<name>RS15_CUTAK</name>
<comment type="function">
    <text evidence="1">One of the primary rRNA binding proteins, it binds directly to 16S rRNA where it helps nucleate assembly of the platform of the 30S subunit by binding and bridging several RNA helices of the 16S rRNA.</text>
</comment>
<comment type="function">
    <text evidence="1">Forms an intersubunit bridge (bridge B4) with the 23S rRNA of the 50S subunit in the ribosome.</text>
</comment>
<comment type="subunit">
    <text evidence="1">Part of the 30S ribosomal subunit. Forms a bridge to the 50S subunit in the 70S ribosome, contacting the 23S rRNA.</text>
</comment>
<comment type="similarity">
    <text evidence="1">Belongs to the universal ribosomal protein uS15 family.</text>
</comment>
<gene>
    <name evidence="1" type="primary">rpsO</name>
    <name type="ordered locus">PPA1472</name>
</gene>
<proteinExistence type="evidence at protein level"/>
<feature type="chain" id="PRO_0000115508" description="Small ribosomal subunit protein uS15">
    <location>
        <begin position="1"/>
        <end position="87"/>
    </location>
</feature>
<feature type="helix" evidence="3">
    <location>
        <begin position="4"/>
        <end position="13"/>
    </location>
</feature>
<feature type="strand" evidence="3">
    <location>
        <begin position="20"/>
        <end position="22"/>
    </location>
</feature>
<feature type="helix" evidence="3">
    <location>
        <begin position="23"/>
        <end position="43"/>
    </location>
</feature>
<feature type="helix" evidence="3">
    <location>
        <begin position="48"/>
        <end position="71"/>
    </location>
</feature>
<feature type="helix" evidence="3">
    <location>
        <begin position="73"/>
        <end position="82"/>
    </location>
</feature>
<feature type="helix" evidence="3">
    <location>
        <begin position="84"/>
        <end position="86"/>
    </location>
</feature>
<sequence length="87" mass="10080">MDAAEKKKIIEEYATHPGDTGSPDVQVAILTKRIAELTEHLKVHKGDHHSRRGLMLMVGQRRRLLNYIAKNDIEHYRELIARLGLRR</sequence>
<organism>
    <name type="scientific">Cutibacterium acnes (strain DSM 16379 / KPA171202)</name>
    <name type="common">Propionibacterium acnes</name>
    <dbReference type="NCBI Taxonomy" id="267747"/>
    <lineage>
        <taxon>Bacteria</taxon>
        <taxon>Bacillati</taxon>
        <taxon>Actinomycetota</taxon>
        <taxon>Actinomycetes</taxon>
        <taxon>Propionibacteriales</taxon>
        <taxon>Propionibacteriaceae</taxon>
        <taxon>Cutibacterium</taxon>
    </lineage>
</organism>
<reference key="1">
    <citation type="journal article" date="2004" name="Science">
        <title>The complete genome sequence of Propionibacterium acnes, a commensal of human skin.</title>
        <authorList>
            <person name="Brueggemann H."/>
            <person name="Henne A."/>
            <person name="Hoster F."/>
            <person name="Liesegang H."/>
            <person name="Wiezer A."/>
            <person name="Strittmatter A."/>
            <person name="Hujer S."/>
            <person name="Duerre P."/>
            <person name="Gottschalk G."/>
        </authorList>
    </citation>
    <scope>NUCLEOTIDE SEQUENCE [LARGE SCALE GENOMIC DNA]</scope>
    <source>
        <strain>DSM 16379 / KPA171202</strain>
    </source>
</reference>